<reference key="1">
    <citation type="submission" date="2004-06" db="EMBL/GenBank/DDBJ databases">
        <authorList>
            <consortium name="NIH - Xenopus Gene Collection (XGC) project"/>
        </authorList>
    </citation>
    <scope>NUCLEOTIDE SEQUENCE [LARGE SCALE MRNA]</scope>
</reference>
<organism>
    <name type="scientific">Xenopus tropicalis</name>
    <name type="common">Western clawed frog</name>
    <name type="synonym">Silurana tropicalis</name>
    <dbReference type="NCBI Taxonomy" id="8364"/>
    <lineage>
        <taxon>Eukaryota</taxon>
        <taxon>Metazoa</taxon>
        <taxon>Chordata</taxon>
        <taxon>Craniata</taxon>
        <taxon>Vertebrata</taxon>
        <taxon>Euteleostomi</taxon>
        <taxon>Amphibia</taxon>
        <taxon>Batrachia</taxon>
        <taxon>Anura</taxon>
        <taxon>Pipoidea</taxon>
        <taxon>Pipidae</taxon>
        <taxon>Xenopodinae</taxon>
        <taxon>Xenopus</taxon>
        <taxon>Silurana</taxon>
    </lineage>
</organism>
<dbReference type="EMBL" id="BC075402">
    <property type="protein sequence ID" value="AAH75402.1"/>
    <property type="molecule type" value="mRNA"/>
</dbReference>
<dbReference type="RefSeq" id="NP_001006697.1">
    <property type="nucleotide sequence ID" value="NM_001006696.1"/>
</dbReference>
<dbReference type="SMR" id="Q6DIY3"/>
<dbReference type="FunCoup" id="Q6DIY3">
    <property type="interactions" value="1922"/>
</dbReference>
<dbReference type="STRING" id="8364.ENSXETP00000044230"/>
<dbReference type="PaxDb" id="8364-ENSXETP00000059786"/>
<dbReference type="GeneID" id="448324"/>
<dbReference type="KEGG" id="xtr:448324"/>
<dbReference type="AGR" id="Xenbase:XB-GENE-940312"/>
<dbReference type="CTD" id="55844"/>
<dbReference type="Xenbase" id="XB-GENE-940312">
    <property type="gene designation" value="ppp2r2d"/>
</dbReference>
<dbReference type="eggNOG" id="KOG1354">
    <property type="taxonomic scope" value="Eukaryota"/>
</dbReference>
<dbReference type="InParanoid" id="Q6DIY3"/>
<dbReference type="OMA" id="LSHHDTI"/>
<dbReference type="OrthoDB" id="6274823at2759"/>
<dbReference type="Proteomes" id="UP000008143">
    <property type="component" value="Chromosome 7"/>
</dbReference>
<dbReference type="Bgee" id="ENSXETG00000005442">
    <property type="expression patterns" value="Expressed in ovary and 14 other cell types or tissues"/>
</dbReference>
<dbReference type="ExpressionAtlas" id="Q6DIY3">
    <property type="expression patterns" value="baseline and differential"/>
</dbReference>
<dbReference type="GO" id="GO:0005737">
    <property type="term" value="C:cytoplasm"/>
    <property type="evidence" value="ECO:0007669"/>
    <property type="project" value="UniProtKB-SubCell"/>
</dbReference>
<dbReference type="GO" id="GO:0000159">
    <property type="term" value="C:protein phosphatase type 2A complex"/>
    <property type="evidence" value="ECO:0000250"/>
    <property type="project" value="UniProtKB"/>
</dbReference>
<dbReference type="GO" id="GO:0140767">
    <property type="term" value="F:enzyme-substrate adaptor activity"/>
    <property type="evidence" value="ECO:0000250"/>
    <property type="project" value="UniProtKB"/>
</dbReference>
<dbReference type="GO" id="GO:0019888">
    <property type="term" value="F:protein phosphatase regulator activity"/>
    <property type="evidence" value="ECO:0000250"/>
    <property type="project" value="UniProtKB"/>
</dbReference>
<dbReference type="GO" id="GO:0051301">
    <property type="term" value="P:cell division"/>
    <property type="evidence" value="ECO:0007669"/>
    <property type="project" value="UniProtKB-KW"/>
</dbReference>
<dbReference type="GO" id="GO:0010458">
    <property type="term" value="P:exit from mitosis"/>
    <property type="evidence" value="ECO:0000250"/>
    <property type="project" value="UniProtKB"/>
</dbReference>
<dbReference type="GO" id="GO:0000278">
    <property type="term" value="P:mitotic cell cycle"/>
    <property type="evidence" value="ECO:0000250"/>
    <property type="project" value="UniProtKB"/>
</dbReference>
<dbReference type="GO" id="GO:0051983">
    <property type="term" value="P:regulation of chromosome segregation"/>
    <property type="evidence" value="ECO:0000250"/>
    <property type="project" value="UniProtKB"/>
</dbReference>
<dbReference type="FunFam" id="2.130.10.10:FF:000002">
    <property type="entry name" value="Serine/threonine-protein phosphatase 2A 55 kDa regulatory subunit B"/>
    <property type="match status" value="1"/>
</dbReference>
<dbReference type="Gene3D" id="2.130.10.10">
    <property type="entry name" value="YVTN repeat-like/Quinoprotein amine dehydrogenase"/>
    <property type="match status" value="1"/>
</dbReference>
<dbReference type="InterPro" id="IPR000009">
    <property type="entry name" value="PP2A_PR55"/>
</dbReference>
<dbReference type="InterPro" id="IPR018067">
    <property type="entry name" value="PP2A_PR55_CS"/>
</dbReference>
<dbReference type="InterPro" id="IPR015943">
    <property type="entry name" value="WD40/YVTN_repeat-like_dom_sf"/>
</dbReference>
<dbReference type="InterPro" id="IPR036322">
    <property type="entry name" value="WD40_repeat_dom_sf"/>
</dbReference>
<dbReference type="InterPro" id="IPR001680">
    <property type="entry name" value="WD40_rpt"/>
</dbReference>
<dbReference type="PANTHER" id="PTHR11871">
    <property type="entry name" value="PROTEIN PHOSPHATASE PP2A REGULATORY SUBUNIT B"/>
    <property type="match status" value="1"/>
</dbReference>
<dbReference type="PIRSF" id="PIRSF037309">
    <property type="entry name" value="PP2A_PR55"/>
    <property type="match status" value="1"/>
</dbReference>
<dbReference type="PRINTS" id="PR00600">
    <property type="entry name" value="PP2APR55"/>
</dbReference>
<dbReference type="SMART" id="SM00320">
    <property type="entry name" value="WD40"/>
    <property type="match status" value="7"/>
</dbReference>
<dbReference type="SUPFAM" id="SSF50978">
    <property type="entry name" value="WD40 repeat-like"/>
    <property type="match status" value="1"/>
</dbReference>
<dbReference type="PROSITE" id="PS01024">
    <property type="entry name" value="PR55_1"/>
    <property type="match status" value="1"/>
</dbReference>
<dbReference type="PROSITE" id="PS01025">
    <property type="entry name" value="PR55_2"/>
    <property type="match status" value="1"/>
</dbReference>
<name>2ABD_XENTR</name>
<protein>
    <recommendedName>
        <fullName>Serine/threonine-protein phosphatase 2A 55 kDa regulatory subunit B delta isoform</fullName>
    </recommendedName>
    <alternativeName>
        <fullName>PP2A subunit B isoform B55-delta</fullName>
    </alternativeName>
    <alternativeName>
        <fullName>PP2A subunit B isoform PR55-delta</fullName>
    </alternativeName>
    <alternativeName>
        <fullName>PP2A subunit B isoform R2-delta</fullName>
    </alternativeName>
    <alternativeName>
        <fullName>PP2A subunit B isoform delta</fullName>
    </alternativeName>
</protein>
<keyword id="KW-0131">Cell cycle</keyword>
<keyword id="KW-0132">Cell division</keyword>
<keyword id="KW-0963">Cytoplasm</keyword>
<keyword id="KW-0498">Mitosis</keyword>
<keyword id="KW-1185">Reference proteome</keyword>
<keyword id="KW-0677">Repeat</keyword>
<keyword id="KW-0853">WD repeat</keyword>
<gene>
    <name type="primary">ppp2r2d</name>
</gene>
<sequence length="447" mass="51678">MAGVGGGNDFQWCFSQVKGAIDEDVAEADIISTVEFNCSGDLLATGDKGGRVVIFQREQENKSRPHSRGEYNVYSTFQSHEPEFDYLKSLEIEEKINKIRWLPQQNAAHFLLSTNDKTIKLWKISERDKRVEGYNLKDDDGRLRDPFRITSLRVPILKPMDLMVEASPRRIFANAHTYHINSISVNSDHETYLSADDLRINLWHLEITDRSFNIVDIKPANMEELTEVITAAEFHPHHCNVFVYSSSKGTIRLCDMRDSALCDRHSKFFEEPEDPSSRSFFSEIISSISDVKFSNSGRYMMTRDYLSVKVWDLNMESRPVETYQVHEYLRSKLCSLYENDCIFDKFECCWNGSDSAIMTGSYNNFFRMFDRNTRRDITLEASRESSKPRAILKPRKVCTGGKRKKDEINVDSLDFNKKILHTAWHPTDNIIAVAATNNLYIFQDKVN</sequence>
<accession>Q6DIY3</accession>
<feature type="chain" id="PRO_0000408326" description="Serine/threonine-protein phosphatase 2A 55 kDa regulatory subunit B delta isoform">
    <location>
        <begin position="1"/>
        <end position="447"/>
    </location>
</feature>
<feature type="repeat" description="WD 1">
    <location>
        <begin position="26"/>
        <end position="65"/>
    </location>
</feature>
<feature type="repeat" description="WD 2">
    <location>
        <begin position="91"/>
        <end position="132"/>
    </location>
</feature>
<feature type="repeat" description="WD 3">
    <location>
        <begin position="175"/>
        <end position="213"/>
    </location>
</feature>
<feature type="repeat" description="WD 4">
    <location>
        <begin position="224"/>
        <end position="264"/>
    </location>
</feature>
<feature type="repeat" description="WD 5">
    <location>
        <begin position="283"/>
        <end position="321"/>
    </location>
</feature>
<feature type="repeat" description="WD 6">
    <location>
        <begin position="338"/>
        <end position="379"/>
    </location>
</feature>
<feature type="repeat" description="WD 7">
    <location>
        <begin position="414"/>
        <end position="447"/>
    </location>
</feature>
<evidence type="ECO:0000250" key="1">
    <source>
        <dbReference type="UniProtKB" id="P56932"/>
    </source>
</evidence>
<evidence type="ECO:0000250" key="2">
    <source>
        <dbReference type="UniProtKB" id="Q7ZX64"/>
    </source>
</evidence>
<evidence type="ECO:0000305" key="3"/>
<proteinExistence type="evidence at transcript level"/>
<comment type="function">
    <text evidence="2">Substrate-recognition subunit of protein phosphatase 2A (PP2A) that plays a key role in cell cycle by controlling mitosis entry and exit. The activity of PP2A complexes containing ppp2r2d (PR55-delta) fluctuate during the cell cycle: the activity is high in interphase and low in mitosis. During mitosis, activity of PP2A is inhibited via interaction with phosphorylated ensa and arpp19 inhibitors. PP2A complexes containing ppp2r2d (PR55-delta) also regulate the activity of TGF-beta/Activin/Nodal signaling by restricting receptor activity. Within the PP2A complexes, the B regulatory subunits modulate substrate selectivity and catalytic activity, and may also direct the localization of the catalytic enzyme to a particular subcellular compartment.</text>
</comment>
<comment type="subunit">
    <text evidence="2">PP2A consists of a common heterodimeric core enzyme, composed of a 36 kDa catalytic subunit (subunit C) and a 65 kDa constant regulatory subunit (PR65 or subunit A), that associates with a variety of regulatory subunits. Proteins that associate with the core dimer include three families of regulatory subunits B (the R2/B/PR55/B55, R3/B''/PR72/PR130/PR59 and R5/B'/B56 families), the 48 kDa variable regulatory subunit, viral proteins, and cell signaling molecules. Interacts with ensa (when phosphorylated at 'Ser-67') and arpp19 (when phosphorylated at 'Ser-67'), leading to inhibit PP2A activity.</text>
</comment>
<comment type="subcellular location">
    <subcellularLocation>
        <location evidence="1">Cytoplasm</location>
    </subcellularLocation>
</comment>
<comment type="similarity">
    <text evidence="3">Belongs to the phosphatase 2A regulatory subunit B family.</text>
</comment>